<protein>
    <recommendedName>
        <fullName>Putative uncharacterized protein ENSP00000382790 homolog</fullName>
    </recommendedName>
</protein>
<evidence type="ECO:0000256" key="1">
    <source>
        <dbReference type="SAM" id="MobiDB-lite"/>
    </source>
</evidence>
<evidence type="ECO:0000305" key="2"/>
<gene>
    <name type="primary">Gm3414</name>
</gene>
<feature type="chain" id="PRO_0000341236" description="Putative uncharacterized protein ENSP00000382790 homolog">
    <location>
        <begin position="1"/>
        <end position="584"/>
    </location>
</feature>
<feature type="region of interest" description="Disordered" evidence="1">
    <location>
        <begin position="353"/>
        <end position="379"/>
    </location>
</feature>
<feature type="region of interest" description="Disordered" evidence="1">
    <location>
        <begin position="400"/>
        <end position="426"/>
    </location>
</feature>
<feature type="region of interest" description="Disordered" evidence="1">
    <location>
        <begin position="463"/>
        <end position="565"/>
    </location>
</feature>
<feature type="compositionally biased region" description="Polar residues" evidence="1">
    <location>
        <begin position="353"/>
        <end position="375"/>
    </location>
</feature>
<feature type="compositionally biased region" description="Polar residues" evidence="1">
    <location>
        <begin position="502"/>
        <end position="511"/>
    </location>
</feature>
<feature type="compositionally biased region" description="Basic and acidic residues" evidence="1">
    <location>
        <begin position="516"/>
        <end position="535"/>
    </location>
</feature>
<organism>
    <name type="scientific">Mus musculus</name>
    <name type="common">Mouse</name>
    <dbReference type="NCBI Taxonomy" id="10090"/>
    <lineage>
        <taxon>Eukaryota</taxon>
        <taxon>Metazoa</taxon>
        <taxon>Chordata</taxon>
        <taxon>Craniata</taxon>
        <taxon>Vertebrata</taxon>
        <taxon>Euteleostomi</taxon>
        <taxon>Mammalia</taxon>
        <taxon>Eutheria</taxon>
        <taxon>Euarchontoglires</taxon>
        <taxon>Glires</taxon>
        <taxon>Rodentia</taxon>
        <taxon>Myomorpha</taxon>
        <taxon>Muroidea</taxon>
        <taxon>Muridae</taxon>
        <taxon>Murinae</taxon>
        <taxon>Mus</taxon>
        <taxon>Mus</taxon>
    </lineage>
</organism>
<proteinExistence type="uncertain"/>
<sequence>MLEKTCLEEKLDQQCSNVDNIKHTNVDIFKNESNSTVVSIPPKHSIRARKPSLHFLHSFASSGSLTYKNALRHKSCKLHLHKCKNPKKKYRQSGFRLASKGIPRSRCSKKAKKYLEDKKLMPISEVSLDPVISSNPLLRWWATSASNDSLLEELNNRFEQITNAWVQVSKDEAQNFVHKTEYTKGDHCEAASPLETCLLELEVSPVKMLFQKKYNLNELCTWFMQTTETQSLSLVRKANARNPLEVISTKGIKLGVKCCGFNASPFRKHFKKFAVSSPSKPAGKFHILHKMVGSPLLNVKSNLTLARLKRTEFKNLHCERWRREERPYSHRTVDWSSKRRNLRLFCQNPSWTNSEGQTNAETSLNGKGTVGNQWASPPEPRVTFAKKRVAVHDFRTHASLESKFNGTGGGQTDSEKEQIMESVSSHNWRSKTLKDCRIFLRKINCLEHRNTFKLNTIIYSPESVDSGGSQAQPEESKRFSLRSHSARQNSFKKQNEERANPKANSPASSRLTGELDSSHLSKHVNFDKNPDHSEALSKLSKRKRPPWKTTEMSAKRHKRQSCNSGQMANYCTKSQVGKLFSPSF</sequence>
<accession>Q3TNU4</accession>
<dbReference type="EMBL" id="AK164990">
    <property type="protein sequence ID" value="BAE37993.1"/>
    <property type="molecule type" value="mRNA"/>
</dbReference>
<dbReference type="SwissPalm" id="Q3TNU4"/>
<dbReference type="AGR" id="MGI:2651932"/>
<dbReference type="MGI" id="MGI:3781592">
    <property type="gene designation" value="Gm3414"/>
</dbReference>
<dbReference type="InParanoid" id="Q3TNU4"/>
<dbReference type="Proteomes" id="UP000000589">
    <property type="component" value="Unplaced"/>
</dbReference>
<dbReference type="RNAct" id="Q3TNU4">
    <property type="molecule type" value="protein"/>
</dbReference>
<dbReference type="InterPro" id="IPR028104">
    <property type="entry name" value="DUF4553"/>
</dbReference>
<dbReference type="PANTHER" id="PTHR14931">
    <property type="entry name" value="GENE 340-RELATED"/>
    <property type="match status" value="1"/>
</dbReference>
<dbReference type="PANTHER" id="PTHR14931:SF1">
    <property type="entry name" value="LIGAND DEPENDENT NUCLEAR RECEPTOR COREPRESSOR LIKE"/>
    <property type="match status" value="1"/>
</dbReference>
<dbReference type="Pfam" id="PF15090">
    <property type="entry name" value="DUF4553"/>
    <property type="match status" value="1"/>
</dbReference>
<keyword id="KW-1185">Reference proteome</keyword>
<name>YD021_MOUSE</name>
<comment type="caution">
    <text evidence="2">Product of a dubious CDS prediction. Encoded in the intron of LCORL1. Could share a non-coding exon with this gene.</text>
</comment>
<reference key="1">
    <citation type="journal article" date="2005" name="Science">
        <title>The transcriptional landscape of the mammalian genome.</title>
        <authorList>
            <person name="Carninci P."/>
            <person name="Kasukawa T."/>
            <person name="Katayama S."/>
            <person name="Gough J."/>
            <person name="Frith M.C."/>
            <person name="Maeda N."/>
            <person name="Oyama R."/>
            <person name="Ravasi T."/>
            <person name="Lenhard B."/>
            <person name="Wells C."/>
            <person name="Kodzius R."/>
            <person name="Shimokawa K."/>
            <person name="Bajic V.B."/>
            <person name="Brenner S.E."/>
            <person name="Batalov S."/>
            <person name="Forrest A.R."/>
            <person name="Zavolan M."/>
            <person name="Davis M.J."/>
            <person name="Wilming L.G."/>
            <person name="Aidinis V."/>
            <person name="Allen J.E."/>
            <person name="Ambesi-Impiombato A."/>
            <person name="Apweiler R."/>
            <person name="Aturaliya R.N."/>
            <person name="Bailey T.L."/>
            <person name="Bansal M."/>
            <person name="Baxter L."/>
            <person name="Beisel K.W."/>
            <person name="Bersano T."/>
            <person name="Bono H."/>
            <person name="Chalk A.M."/>
            <person name="Chiu K.P."/>
            <person name="Choudhary V."/>
            <person name="Christoffels A."/>
            <person name="Clutterbuck D.R."/>
            <person name="Crowe M.L."/>
            <person name="Dalla E."/>
            <person name="Dalrymple B.P."/>
            <person name="de Bono B."/>
            <person name="Della Gatta G."/>
            <person name="di Bernardo D."/>
            <person name="Down T."/>
            <person name="Engstrom P."/>
            <person name="Fagiolini M."/>
            <person name="Faulkner G."/>
            <person name="Fletcher C.F."/>
            <person name="Fukushima T."/>
            <person name="Furuno M."/>
            <person name="Futaki S."/>
            <person name="Gariboldi M."/>
            <person name="Georgii-Hemming P."/>
            <person name="Gingeras T.R."/>
            <person name="Gojobori T."/>
            <person name="Green R.E."/>
            <person name="Gustincich S."/>
            <person name="Harbers M."/>
            <person name="Hayashi Y."/>
            <person name="Hensch T.K."/>
            <person name="Hirokawa N."/>
            <person name="Hill D."/>
            <person name="Huminiecki L."/>
            <person name="Iacono M."/>
            <person name="Ikeo K."/>
            <person name="Iwama A."/>
            <person name="Ishikawa T."/>
            <person name="Jakt M."/>
            <person name="Kanapin A."/>
            <person name="Katoh M."/>
            <person name="Kawasawa Y."/>
            <person name="Kelso J."/>
            <person name="Kitamura H."/>
            <person name="Kitano H."/>
            <person name="Kollias G."/>
            <person name="Krishnan S.P."/>
            <person name="Kruger A."/>
            <person name="Kummerfeld S.K."/>
            <person name="Kurochkin I.V."/>
            <person name="Lareau L.F."/>
            <person name="Lazarevic D."/>
            <person name="Lipovich L."/>
            <person name="Liu J."/>
            <person name="Liuni S."/>
            <person name="McWilliam S."/>
            <person name="Madan Babu M."/>
            <person name="Madera M."/>
            <person name="Marchionni L."/>
            <person name="Matsuda H."/>
            <person name="Matsuzawa S."/>
            <person name="Miki H."/>
            <person name="Mignone F."/>
            <person name="Miyake S."/>
            <person name="Morris K."/>
            <person name="Mottagui-Tabar S."/>
            <person name="Mulder N."/>
            <person name="Nakano N."/>
            <person name="Nakauchi H."/>
            <person name="Ng P."/>
            <person name="Nilsson R."/>
            <person name="Nishiguchi S."/>
            <person name="Nishikawa S."/>
            <person name="Nori F."/>
            <person name="Ohara O."/>
            <person name="Okazaki Y."/>
            <person name="Orlando V."/>
            <person name="Pang K.C."/>
            <person name="Pavan W.J."/>
            <person name="Pavesi G."/>
            <person name="Pesole G."/>
            <person name="Petrovsky N."/>
            <person name="Piazza S."/>
            <person name="Reed J."/>
            <person name="Reid J.F."/>
            <person name="Ring B.Z."/>
            <person name="Ringwald M."/>
            <person name="Rost B."/>
            <person name="Ruan Y."/>
            <person name="Salzberg S.L."/>
            <person name="Sandelin A."/>
            <person name="Schneider C."/>
            <person name="Schoenbach C."/>
            <person name="Sekiguchi K."/>
            <person name="Semple C.A."/>
            <person name="Seno S."/>
            <person name="Sessa L."/>
            <person name="Sheng Y."/>
            <person name="Shibata Y."/>
            <person name="Shimada H."/>
            <person name="Shimada K."/>
            <person name="Silva D."/>
            <person name="Sinclair B."/>
            <person name="Sperling S."/>
            <person name="Stupka E."/>
            <person name="Sugiura K."/>
            <person name="Sultana R."/>
            <person name="Takenaka Y."/>
            <person name="Taki K."/>
            <person name="Tammoja K."/>
            <person name="Tan S.L."/>
            <person name="Tang S."/>
            <person name="Taylor M.S."/>
            <person name="Tegner J."/>
            <person name="Teichmann S.A."/>
            <person name="Ueda H.R."/>
            <person name="van Nimwegen E."/>
            <person name="Verardo R."/>
            <person name="Wei C.L."/>
            <person name="Yagi K."/>
            <person name="Yamanishi H."/>
            <person name="Zabarovsky E."/>
            <person name="Zhu S."/>
            <person name="Zimmer A."/>
            <person name="Hide W."/>
            <person name="Bult C."/>
            <person name="Grimmond S.M."/>
            <person name="Teasdale R.D."/>
            <person name="Liu E.T."/>
            <person name="Brusic V."/>
            <person name="Quackenbush J."/>
            <person name="Wahlestedt C."/>
            <person name="Mattick J.S."/>
            <person name="Hume D.A."/>
            <person name="Kai C."/>
            <person name="Sasaki D."/>
            <person name="Tomaru Y."/>
            <person name="Fukuda S."/>
            <person name="Kanamori-Katayama M."/>
            <person name="Suzuki M."/>
            <person name="Aoki J."/>
            <person name="Arakawa T."/>
            <person name="Iida J."/>
            <person name="Imamura K."/>
            <person name="Itoh M."/>
            <person name="Kato T."/>
            <person name="Kawaji H."/>
            <person name="Kawagashira N."/>
            <person name="Kawashima T."/>
            <person name="Kojima M."/>
            <person name="Kondo S."/>
            <person name="Konno H."/>
            <person name="Nakano K."/>
            <person name="Ninomiya N."/>
            <person name="Nishio T."/>
            <person name="Okada M."/>
            <person name="Plessy C."/>
            <person name="Shibata K."/>
            <person name="Shiraki T."/>
            <person name="Suzuki S."/>
            <person name="Tagami M."/>
            <person name="Waki K."/>
            <person name="Watahiki A."/>
            <person name="Okamura-Oho Y."/>
            <person name="Suzuki H."/>
            <person name="Kawai J."/>
            <person name="Hayashizaki Y."/>
        </authorList>
    </citation>
    <scope>NUCLEOTIDE SEQUENCE [LARGE SCALE MRNA]</scope>
    <source>
        <strain>C57BL/6J</strain>
        <tissue>Eye</tissue>
    </source>
</reference>